<evidence type="ECO:0000255" key="1">
    <source>
        <dbReference type="HAMAP-Rule" id="MF_01405"/>
    </source>
</evidence>
<evidence type="ECO:0000305" key="2"/>
<accession>Q5M626</accession>
<name>IXTPA_STRT2</name>
<gene>
    <name type="ordered locus">stu0256</name>
</gene>
<feature type="chain" id="PRO_0000178247" description="dITP/XTP pyrophosphatase">
    <location>
        <begin position="1"/>
        <end position="324"/>
    </location>
</feature>
<feature type="region of interest" description="Unknown">
    <location>
        <begin position="1"/>
        <end position="126"/>
    </location>
</feature>
<feature type="region of interest" description="NTP pyrophosphatase">
    <location>
        <begin position="127"/>
        <end position="324"/>
    </location>
</feature>
<feature type="active site" description="Proton acceptor" evidence="1">
    <location>
        <position position="193"/>
    </location>
</feature>
<feature type="binding site" evidence="1">
    <location>
        <begin position="131"/>
        <end position="136"/>
    </location>
    <ligand>
        <name>substrate</name>
    </ligand>
</feature>
<feature type="binding site" evidence="1">
    <location>
        <position position="193"/>
    </location>
    <ligand>
        <name>Mg(2+)</name>
        <dbReference type="ChEBI" id="CHEBI:18420"/>
    </ligand>
</feature>
<feature type="binding site" evidence="1">
    <location>
        <position position="194"/>
    </location>
    <ligand>
        <name>substrate</name>
    </ligand>
</feature>
<feature type="binding site" evidence="1">
    <location>
        <begin position="277"/>
        <end position="280"/>
    </location>
    <ligand>
        <name>substrate</name>
    </ligand>
</feature>
<feature type="binding site" evidence="1">
    <location>
        <position position="300"/>
    </location>
    <ligand>
        <name>substrate</name>
    </ligand>
</feature>
<feature type="binding site" evidence="1">
    <location>
        <begin position="305"/>
        <end position="306"/>
    </location>
    <ligand>
        <name>substrate</name>
    </ligand>
</feature>
<reference key="1">
    <citation type="journal article" date="2004" name="Nat. Biotechnol.">
        <title>Complete sequence and comparative genome analysis of the dairy bacterium Streptococcus thermophilus.</title>
        <authorList>
            <person name="Bolotin A."/>
            <person name="Quinquis B."/>
            <person name="Renault P."/>
            <person name="Sorokin A."/>
            <person name="Ehrlich S.D."/>
            <person name="Kulakauskas S."/>
            <person name="Lapidus A."/>
            <person name="Goltsman E."/>
            <person name="Mazur M."/>
            <person name="Pusch G.D."/>
            <person name="Fonstein M."/>
            <person name="Overbeek R."/>
            <person name="Kyprides N."/>
            <person name="Purnelle B."/>
            <person name="Prozzi D."/>
            <person name="Ngui K."/>
            <person name="Masuy D."/>
            <person name="Hancy F."/>
            <person name="Burteau S."/>
            <person name="Boutry M."/>
            <person name="Delcour J."/>
            <person name="Goffeau A."/>
            <person name="Hols P."/>
        </authorList>
    </citation>
    <scope>NUCLEOTIDE SEQUENCE [LARGE SCALE GENOMIC DNA]</scope>
    <source>
        <strain>ATCC BAA-250 / LMG 18311</strain>
    </source>
</reference>
<proteinExistence type="inferred from homology"/>
<organism>
    <name type="scientific">Streptococcus thermophilus (strain ATCC BAA-250 / LMG 18311)</name>
    <dbReference type="NCBI Taxonomy" id="264199"/>
    <lineage>
        <taxon>Bacteria</taxon>
        <taxon>Bacillati</taxon>
        <taxon>Bacillota</taxon>
        <taxon>Bacilli</taxon>
        <taxon>Lactobacillales</taxon>
        <taxon>Streptococcaceae</taxon>
        <taxon>Streptococcus</taxon>
    </lineage>
</organism>
<dbReference type="EC" id="3.6.1.66" evidence="1"/>
<dbReference type="EMBL" id="CP000023">
    <property type="protein sequence ID" value="AAV59980.1"/>
    <property type="molecule type" value="Genomic_DNA"/>
</dbReference>
<dbReference type="RefSeq" id="WP_002949485.1">
    <property type="nucleotide sequence ID" value="NC_006448.1"/>
</dbReference>
<dbReference type="SMR" id="Q5M626"/>
<dbReference type="STRING" id="264199.stu0256"/>
<dbReference type="KEGG" id="stl:stu0256"/>
<dbReference type="PATRIC" id="fig|264199.4.peg.263"/>
<dbReference type="eggNOG" id="COG0127">
    <property type="taxonomic scope" value="Bacteria"/>
</dbReference>
<dbReference type="HOGENOM" id="CLU_863088_0_0_9"/>
<dbReference type="Proteomes" id="UP000001170">
    <property type="component" value="Chromosome"/>
</dbReference>
<dbReference type="GO" id="GO:0005829">
    <property type="term" value="C:cytosol"/>
    <property type="evidence" value="ECO:0007669"/>
    <property type="project" value="TreeGrafter"/>
</dbReference>
<dbReference type="GO" id="GO:0035870">
    <property type="term" value="F:dITP diphosphatase activity"/>
    <property type="evidence" value="ECO:0007669"/>
    <property type="project" value="RHEA"/>
</dbReference>
<dbReference type="GO" id="GO:0036220">
    <property type="term" value="F:ITP diphosphatase activity"/>
    <property type="evidence" value="ECO:0007669"/>
    <property type="project" value="UniProtKB-EC"/>
</dbReference>
<dbReference type="GO" id="GO:0046872">
    <property type="term" value="F:metal ion binding"/>
    <property type="evidence" value="ECO:0007669"/>
    <property type="project" value="UniProtKB-KW"/>
</dbReference>
<dbReference type="GO" id="GO:0000166">
    <property type="term" value="F:nucleotide binding"/>
    <property type="evidence" value="ECO:0007669"/>
    <property type="project" value="UniProtKB-KW"/>
</dbReference>
<dbReference type="GO" id="GO:0017111">
    <property type="term" value="F:ribonucleoside triphosphate phosphatase activity"/>
    <property type="evidence" value="ECO:0007669"/>
    <property type="project" value="InterPro"/>
</dbReference>
<dbReference type="GO" id="GO:0036222">
    <property type="term" value="F:XTP diphosphatase activity"/>
    <property type="evidence" value="ECO:0007669"/>
    <property type="project" value="RHEA"/>
</dbReference>
<dbReference type="GO" id="GO:0009117">
    <property type="term" value="P:nucleotide metabolic process"/>
    <property type="evidence" value="ECO:0007669"/>
    <property type="project" value="UniProtKB-KW"/>
</dbReference>
<dbReference type="GO" id="GO:0009146">
    <property type="term" value="P:purine nucleoside triphosphate catabolic process"/>
    <property type="evidence" value="ECO:0007669"/>
    <property type="project" value="UniProtKB-UniRule"/>
</dbReference>
<dbReference type="CDD" id="cd00515">
    <property type="entry name" value="HAM1"/>
    <property type="match status" value="1"/>
</dbReference>
<dbReference type="FunFam" id="3.90.950.10:FF:000001">
    <property type="entry name" value="dITP/XTP pyrophosphatase"/>
    <property type="match status" value="1"/>
</dbReference>
<dbReference type="Gene3D" id="3.90.950.10">
    <property type="match status" value="1"/>
</dbReference>
<dbReference type="HAMAP" id="MF_01405">
    <property type="entry name" value="Non_canon_purine_NTPase"/>
    <property type="match status" value="1"/>
</dbReference>
<dbReference type="InterPro" id="IPR020922">
    <property type="entry name" value="dITP/XTP_pyrophosphatase"/>
</dbReference>
<dbReference type="InterPro" id="IPR029001">
    <property type="entry name" value="ITPase-like_fam"/>
</dbReference>
<dbReference type="InterPro" id="IPR002637">
    <property type="entry name" value="RdgB/HAM1"/>
</dbReference>
<dbReference type="NCBIfam" id="NF002698">
    <property type="entry name" value="PRK02491.1"/>
    <property type="match status" value="1"/>
</dbReference>
<dbReference type="NCBIfam" id="NF011397">
    <property type="entry name" value="PRK14822.1"/>
    <property type="match status" value="1"/>
</dbReference>
<dbReference type="NCBIfam" id="TIGR00042">
    <property type="entry name" value="RdgB/HAM1 family non-canonical purine NTP pyrophosphatase"/>
    <property type="match status" value="1"/>
</dbReference>
<dbReference type="PANTHER" id="PTHR11067:SF9">
    <property type="entry name" value="INOSINE TRIPHOSPHATE PYROPHOSPHATASE"/>
    <property type="match status" value="1"/>
</dbReference>
<dbReference type="PANTHER" id="PTHR11067">
    <property type="entry name" value="INOSINE TRIPHOSPHATE PYROPHOSPHATASE/HAM1 PROTEIN"/>
    <property type="match status" value="1"/>
</dbReference>
<dbReference type="Pfam" id="PF01725">
    <property type="entry name" value="Ham1p_like"/>
    <property type="match status" value="1"/>
</dbReference>
<dbReference type="SUPFAM" id="SSF52972">
    <property type="entry name" value="ITPase-like"/>
    <property type="match status" value="1"/>
</dbReference>
<keyword id="KW-0378">Hydrolase</keyword>
<keyword id="KW-0460">Magnesium</keyword>
<keyword id="KW-0479">Metal-binding</keyword>
<keyword id="KW-0546">Nucleotide metabolism</keyword>
<keyword id="KW-0547">Nucleotide-binding</keyword>
<keyword id="KW-1185">Reference proteome</keyword>
<comment type="function">
    <text evidence="1">Pyrophosphatase that catalyzes the hydrolysis of nucleoside triphosphates to their monophosphate derivatives, with a high preference for the non-canonical purine nucleotides XTP (xanthosine triphosphate), dITP (deoxyinosine triphosphate) and ITP. Seems to function as a house-cleaning enzyme that removes non-canonical purine nucleotides from the nucleotide pool, thus preventing their incorporation into DNA/RNA and avoiding chromosomal lesions.</text>
</comment>
<comment type="catalytic activity">
    <reaction evidence="1">
        <text>XTP + H2O = XMP + diphosphate + H(+)</text>
        <dbReference type="Rhea" id="RHEA:28610"/>
        <dbReference type="ChEBI" id="CHEBI:15377"/>
        <dbReference type="ChEBI" id="CHEBI:15378"/>
        <dbReference type="ChEBI" id="CHEBI:33019"/>
        <dbReference type="ChEBI" id="CHEBI:57464"/>
        <dbReference type="ChEBI" id="CHEBI:61314"/>
        <dbReference type="EC" id="3.6.1.66"/>
    </reaction>
</comment>
<comment type="catalytic activity">
    <reaction evidence="1">
        <text>dITP + H2O = dIMP + diphosphate + H(+)</text>
        <dbReference type="Rhea" id="RHEA:28342"/>
        <dbReference type="ChEBI" id="CHEBI:15377"/>
        <dbReference type="ChEBI" id="CHEBI:15378"/>
        <dbReference type="ChEBI" id="CHEBI:33019"/>
        <dbReference type="ChEBI" id="CHEBI:61194"/>
        <dbReference type="ChEBI" id="CHEBI:61382"/>
        <dbReference type="EC" id="3.6.1.66"/>
    </reaction>
</comment>
<comment type="catalytic activity">
    <reaction evidence="1">
        <text>ITP + H2O = IMP + diphosphate + H(+)</text>
        <dbReference type="Rhea" id="RHEA:29399"/>
        <dbReference type="ChEBI" id="CHEBI:15377"/>
        <dbReference type="ChEBI" id="CHEBI:15378"/>
        <dbReference type="ChEBI" id="CHEBI:33019"/>
        <dbReference type="ChEBI" id="CHEBI:58053"/>
        <dbReference type="ChEBI" id="CHEBI:61402"/>
        <dbReference type="EC" id="3.6.1.66"/>
    </reaction>
</comment>
<comment type="cofactor">
    <cofactor evidence="1">
        <name>Mg(2+)</name>
        <dbReference type="ChEBI" id="CHEBI:18420"/>
    </cofactor>
    <text evidence="1">Binds 1 Mg(2+) ion per subunit.</text>
</comment>
<comment type="subunit">
    <text evidence="1">Homodimer.</text>
</comment>
<comment type="similarity">
    <text evidence="1 2">Belongs to the HAM1 NTPase family.</text>
</comment>
<protein>
    <recommendedName>
        <fullName evidence="1">dITP/XTP pyrophosphatase</fullName>
        <ecNumber evidence="1">3.6.1.66</ecNumber>
    </recommendedName>
    <alternativeName>
        <fullName evidence="1">Non-canonical purine NTP pyrophosphatase</fullName>
    </alternativeName>
    <alternativeName>
        <fullName evidence="1">Non-standard purine NTP pyrophosphatase</fullName>
    </alternativeName>
    <alternativeName>
        <fullName evidence="1">Nucleoside-triphosphate diphosphatase</fullName>
    </alternativeName>
    <alternativeName>
        <fullName evidence="1">Nucleoside-triphosphate pyrophosphatase</fullName>
        <shortName evidence="1">NTPase</shortName>
    </alternativeName>
</protein>
<sequence>MTKSIFEYKDDQDWYLASFGSYNHLTCFGDDEAYEQYVDFFQGLTSTLDVSGFQLHVVKHSSDLRLVSFILDCLKEELGRDLVVTQHQGTLLVSEGDKLLYVHVPREGVSLDDFFGSDNKSDFGDVLLIATRNEGKTKEFRKLFGKLGIKVENLNDYPDLPEVAETGMTFEENARLKAETISKLTGKMVLSDDSGLQVDVLGGLPGVWSARFAGPEATDAENNAKLLHELAMVLDDSKRSAQFHTTLVVAAPGRDSLVVDADWKGYIGREPKGDNGFGYDPLFLVGNTGRTAAELSTEEKNEQSHRGQAVKKLMEVFPAWQNKQ</sequence>